<proteinExistence type="inferred from homology"/>
<dbReference type="EMBL" id="CP000822">
    <property type="protein sequence ID" value="ABV15116.1"/>
    <property type="molecule type" value="Genomic_DNA"/>
</dbReference>
<dbReference type="RefSeq" id="WP_012134806.1">
    <property type="nucleotide sequence ID" value="NC_009792.1"/>
</dbReference>
<dbReference type="SMR" id="A8ANQ3"/>
<dbReference type="STRING" id="290338.CKO_04050"/>
<dbReference type="GeneID" id="45137692"/>
<dbReference type="KEGG" id="cko:CKO_04050"/>
<dbReference type="HOGENOM" id="CLU_040469_3_2_6"/>
<dbReference type="OrthoDB" id="9776733at2"/>
<dbReference type="Proteomes" id="UP000008148">
    <property type="component" value="Chromosome"/>
</dbReference>
<dbReference type="GO" id="GO:0005829">
    <property type="term" value="C:cytosol"/>
    <property type="evidence" value="ECO:0007669"/>
    <property type="project" value="TreeGrafter"/>
</dbReference>
<dbReference type="GO" id="GO:0005524">
    <property type="term" value="F:ATP binding"/>
    <property type="evidence" value="ECO:0007669"/>
    <property type="project" value="UniProtKB-UniRule"/>
</dbReference>
<dbReference type="GO" id="GO:0016887">
    <property type="term" value="F:ATP hydrolysis activity"/>
    <property type="evidence" value="ECO:0007669"/>
    <property type="project" value="InterPro"/>
</dbReference>
<dbReference type="GO" id="GO:0140664">
    <property type="term" value="F:ATP-dependent DNA damage sensor activity"/>
    <property type="evidence" value="ECO:0007669"/>
    <property type="project" value="InterPro"/>
</dbReference>
<dbReference type="GO" id="GO:0003684">
    <property type="term" value="F:damaged DNA binding"/>
    <property type="evidence" value="ECO:0007669"/>
    <property type="project" value="UniProtKB-UniRule"/>
</dbReference>
<dbReference type="GO" id="GO:0003697">
    <property type="term" value="F:single-stranded DNA binding"/>
    <property type="evidence" value="ECO:0007669"/>
    <property type="project" value="UniProtKB-UniRule"/>
</dbReference>
<dbReference type="GO" id="GO:0006310">
    <property type="term" value="P:DNA recombination"/>
    <property type="evidence" value="ECO:0007669"/>
    <property type="project" value="UniProtKB-UniRule"/>
</dbReference>
<dbReference type="GO" id="GO:0006281">
    <property type="term" value="P:DNA repair"/>
    <property type="evidence" value="ECO:0007669"/>
    <property type="project" value="UniProtKB-UniRule"/>
</dbReference>
<dbReference type="GO" id="GO:0009432">
    <property type="term" value="P:SOS response"/>
    <property type="evidence" value="ECO:0007669"/>
    <property type="project" value="UniProtKB-UniRule"/>
</dbReference>
<dbReference type="CDD" id="cd00983">
    <property type="entry name" value="RecA"/>
    <property type="match status" value="1"/>
</dbReference>
<dbReference type="FunFam" id="3.40.50.300:FF:000087">
    <property type="entry name" value="Recombinase RecA"/>
    <property type="match status" value="1"/>
</dbReference>
<dbReference type="Gene3D" id="3.40.50.300">
    <property type="entry name" value="P-loop containing nucleotide triphosphate hydrolases"/>
    <property type="match status" value="1"/>
</dbReference>
<dbReference type="HAMAP" id="MF_00268">
    <property type="entry name" value="RecA"/>
    <property type="match status" value="1"/>
</dbReference>
<dbReference type="InterPro" id="IPR003593">
    <property type="entry name" value="AAA+_ATPase"/>
</dbReference>
<dbReference type="InterPro" id="IPR013765">
    <property type="entry name" value="DNA_recomb/repair_RecA"/>
</dbReference>
<dbReference type="InterPro" id="IPR020584">
    <property type="entry name" value="DNA_recomb/repair_RecA_CS"/>
</dbReference>
<dbReference type="InterPro" id="IPR027417">
    <property type="entry name" value="P-loop_NTPase"/>
</dbReference>
<dbReference type="InterPro" id="IPR049261">
    <property type="entry name" value="RecA-like_C"/>
</dbReference>
<dbReference type="InterPro" id="IPR049428">
    <property type="entry name" value="RecA-like_N"/>
</dbReference>
<dbReference type="InterPro" id="IPR020588">
    <property type="entry name" value="RecA_ATP-bd"/>
</dbReference>
<dbReference type="InterPro" id="IPR023400">
    <property type="entry name" value="RecA_C_sf"/>
</dbReference>
<dbReference type="InterPro" id="IPR020587">
    <property type="entry name" value="RecA_monomer-monomer_interface"/>
</dbReference>
<dbReference type="NCBIfam" id="TIGR02012">
    <property type="entry name" value="tigrfam_recA"/>
    <property type="match status" value="1"/>
</dbReference>
<dbReference type="PANTHER" id="PTHR45900:SF1">
    <property type="entry name" value="MITOCHONDRIAL DNA REPAIR PROTEIN RECA HOMOLOG-RELATED"/>
    <property type="match status" value="1"/>
</dbReference>
<dbReference type="PANTHER" id="PTHR45900">
    <property type="entry name" value="RECA"/>
    <property type="match status" value="1"/>
</dbReference>
<dbReference type="Pfam" id="PF00154">
    <property type="entry name" value="RecA"/>
    <property type="match status" value="1"/>
</dbReference>
<dbReference type="Pfam" id="PF21096">
    <property type="entry name" value="RecA_C"/>
    <property type="match status" value="1"/>
</dbReference>
<dbReference type="PRINTS" id="PR00142">
    <property type="entry name" value="RECA"/>
</dbReference>
<dbReference type="SMART" id="SM00382">
    <property type="entry name" value="AAA"/>
    <property type="match status" value="1"/>
</dbReference>
<dbReference type="SUPFAM" id="SSF52540">
    <property type="entry name" value="P-loop containing nucleoside triphosphate hydrolases"/>
    <property type="match status" value="1"/>
</dbReference>
<dbReference type="SUPFAM" id="SSF54752">
    <property type="entry name" value="RecA protein, C-terminal domain"/>
    <property type="match status" value="1"/>
</dbReference>
<dbReference type="PROSITE" id="PS00321">
    <property type="entry name" value="RECA_1"/>
    <property type="match status" value="1"/>
</dbReference>
<dbReference type="PROSITE" id="PS50162">
    <property type="entry name" value="RECA_2"/>
    <property type="match status" value="1"/>
</dbReference>
<dbReference type="PROSITE" id="PS50163">
    <property type="entry name" value="RECA_3"/>
    <property type="match status" value="1"/>
</dbReference>
<feature type="chain" id="PRO_1000047900" description="Protein RecA">
    <location>
        <begin position="1"/>
        <end position="354"/>
    </location>
</feature>
<feature type="region of interest" description="Disordered" evidence="2">
    <location>
        <begin position="331"/>
        <end position="354"/>
    </location>
</feature>
<feature type="compositionally biased region" description="Basic and acidic residues" evidence="2">
    <location>
        <begin position="345"/>
        <end position="354"/>
    </location>
</feature>
<feature type="binding site" evidence="1">
    <location>
        <begin position="67"/>
        <end position="74"/>
    </location>
    <ligand>
        <name>ATP</name>
        <dbReference type="ChEBI" id="CHEBI:30616"/>
    </ligand>
</feature>
<comment type="function">
    <text evidence="1">Can catalyze the hydrolysis of ATP in the presence of single-stranded DNA, the ATP-dependent uptake of single-stranded DNA by duplex DNA, and the ATP-dependent hybridization of homologous single-stranded DNAs. It interacts with LexA causing its activation and leading to its autocatalytic cleavage.</text>
</comment>
<comment type="subcellular location">
    <subcellularLocation>
        <location evidence="1">Cytoplasm</location>
    </subcellularLocation>
</comment>
<comment type="similarity">
    <text evidence="1">Belongs to the RecA family.</text>
</comment>
<gene>
    <name evidence="1" type="primary">recA</name>
    <name type="ordered locus">CKO_04050</name>
</gene>
<sequence length="354" mass="38088">MAIDENKQKALAAALGQIEKQFGKGSIMRLGEDRSMDVETISTGSLSLDIALGAGGLPMGRIVEIYGPESSGKTTLTLQVIAAAQREGKTCAFIDAEHALDPIYARKLGVDIDNLLCSQPDTGEQALEICDALARSGAVDVIVVDSVAALTPKAEIEGEIGDSHMGLAARMMSQAMRKLAGNLKQSNTLLIFINQIRMKIGVMFGNPETTTGGNALKFYASVRLDIRRIGAVKEGENVVGSETRVKVVKNKIAAPFKQAEFQILYGEGINFYGELVDLGVKEKLIEKAGAWYSYNGEKIGQGKANATAWLKENPATAKEIEKKVRELLLSNQDSTPDFSVDDNGEGVKETNEDF</sequence>
<accession>A8ANQ3</accession>
<organism>
    <name type="scientific">Citrobacter koseri (strain ATCC BAA-895 / CDC 4225-83 / SGSC4696)</name>
    <dbReference type="NCBI Taxonomy" id="290338"/>
    <lineage>
        <taxon>Bacteria</taxon>
        <taxon>Pseudomonadati</taxon>
        <taxon>Pseudomonadota</taxon>
        <taxon>Gammaproteobacteria</taxon>
        <taxon>Enterobacterales</taxon>
        <taxon>Enterobacteriaceae</taxon>
        <taxon>Citrobacter</taxon>
    </lineage>
</organism>
<reference key="1">
    <citation type="submission" date="2007-08" db="EMBL/GenBank/DDBJ databases">
        <authorList>
            <consortium name="The Citrobacter koseri Genome Sequencing Project"/>
            <person name="McClelland M."/>
            <person name="Sanderson E.K."/>
            <person name="Porwollik S."/>
            <person name="Spieth J."/>
            <person name="Clifton W.S."/>
            <person name="Latreille P."/>
            <person name="Courtney L."/>
            <person name="Wang C."/>
            <person name="Pepin K."/>
            <person name="Bhonagiri V."/>
            <person name="Nash W."/>
            <person name="Johnson M."/>
            <person name="Thiruvilangam P."/>
            <person name="Wilson R."/>
        </authorList>
    </citation>
    <scope>NUCLEOTIDE SEQUENCE [LARGE SCALE GENOMIC DNA]</scope>
    <source>
        <strain>ATCC BAA-895 / CDC 4225-83 / SGSC4696</strain>
    </source>
</reference>
<protein>
    <recommendedName>
        <fullName evidence="1">Protein RecA</fullName>
    </recommendedName>
    <alternativeName>
        <fullName evidence="1">Recombinase A</fullName>
    </alternativeName>
</protein>
<keyword id="KW-0067">ATP-binding</keyword>
<keyword id="KW-0963">Cytoplasm</keyword>
<keyword id="KW-0227">DNA damage</keyword>
<keyword id="KW-0233">DNA recombination</keyword>
<keyword id="KW-0234">DNA repair</keyword>
<keyword id="KW-0238">DNA-binding</keyword>
<keyword id="KW-0547">Nucleotide-binding</keyword>
<keyword id="KW-1185">Reference proteome</keyword>
<keyword id="KW-0742">SOS response</keyword>
<name>RECA_CITK8</name>
<evidence type="ECO:0000255" key="1">
    <source>
        <dbReference type="HAMAP-Rule" id="MF_00268"/>
    </source>
</evidence>
<evidence type="ECO:0000256" key="2">
    <source>
        <dbReference type="SAM" id="MobiDB-lite"/>
    </source>
</evidence>